<sequence length="283" mass="29946">MADRGPWRVGVVGYGRLGQSLVSRLLAQGPELGLELVFVWNRDPGRMAGSVPPSLQLQNLAALGERRPDLVVEVAHPKIIHESGAQILRHANLLVGSPSALSDQTTERQLLEASQHWDHAVFVARGALWGAEDIRRLDAAGGLRSLRVTMATHPDGFRLEGPLAAAHSPGPCTVLYEGPVRGLCPFAPRNSNTMAAAALAAPSLGFDGVIGVLVADTSLTDMHVVDVELSGPRGPTGRSFAVHTRRENPAEPGAVTGSATVTAFWQSLLACCQLPSRPGIHLC</sequence>
<keyword id="KW-0025">Alternative splicing</keyword>
<keyword id="KW-0597">Phosphoprotein</keyword>
<keyword id="KW-1267">Proteomics identification</keyword>
<keyword id="KW-1185">Reference proteome</keyword>
<accession>A6ND91</accession>
<accession>Q6NZ37</accession>
<feature type="chain" id="PRO_0000300623" description="Aspartate dehydrogenase domain-containing protein">
    <location>
        <begin position="1"/>
        <end position="283"/>
    </location>
</feature>
<feature type="modified residue" description="Phosphoserine" evidence="6">
    <location>
        <position position="20"/>
    </location>
</feature>
<feature type="modified residue" description="Phosphoserine" evidence="6">
    <location>
        <position position="168"/>
    </location>
</feature>
<feature type="splice variant" id="VSP_038742" description="In isoform 2." evidence="3">
    <original>ADRGPWRVGVVGYGRLGQSLVSRLLAQGPELGLELVFVWNRDPGRMAGSVPPSLQLQNLAALGE</original>
    <variation>GDRVKGSKS</variation>
    <location>
        <begin position="2"/>
        <end position="65"/>
    </location>
</feature>
<feature type="splice variant" id="VSP_038743" description="In isoform 2." evidence="3">
    <location>
        <begin position="95"/>
        <end position="144"/>
    </location>
</feature>
<feature type="sequence variant" id="VAR_062676" description="In dbSNP:rs12977172." evidence="1 2">
    <original>Q</original>
    <variation>R</variation>
    <location>
        <position position="266"/>
    </location>
</feature>
<protein>
    <recommendedName>
        <fullName evidence="4">Aspartate dehydrogenase domain-containing protein</fullName>
    </recommendedName>
</protein>
<name>ASPDH_HUMAN</name>
<comment type="alternative products">
    <event type="alternative splicing"/>
    <isoform>
        <id>A6ND91-1</id>
        <name>1</name>
        <sequence type="displayed"/>
    </isoform>
    <isoform>
        <id>A6ND91-2</id>
        <name>2</name>
        <sequence type="described" ref="VSP_038742 VSP_038743"/>
    </isoform>
</comment>
<comment type="similarity">
    <text evidence="4">Belongs to the L-aspartate dehydrogenase family.</text>
</comment>
<dbReference type="EMBL" id="CH471135">
    <property type="protein sequence ID" value="EAW71880.1"/>
    <property type="molecule type" value="Genomic_DNA"/>
</dbReference>
<dbReference type="EMBL" id="AC008743">
    <property type="status" value="NOT_ANNOTATED_CDS"/>
    <property type="molecule type" value="Genomic_DNA"/>
</dbReference>
<dbReference type="EMBL" id="BC066359">
    <property type="protein sequence ID" value="AAH66359.1"/>
    <property type="molecule type" value="mRNA"/>
</dbReference>
<dbReference type="CCDS" id="CCDS33082.1">
    <molecule id="A6ND91-2"/>
</dbReference>
<dbReference type="CCDS" id="CCDS46153.1">
    <molecule id="A6ND91-1"/>
</dbReference>
<dbReference type="RefSeq" id="NP_001019827.2">
    <molecule id="A6ND91-2"/>
    <property type="nucleotide sequence ID" value="NM_001024656.3"/>
</dbReference>
<dbReference type="RefSeq" id="NP_001108070.1">
    <molecule id="A6ND91-1"/>
    <property type="nucleotide sequence ID" value="NM_001114598.2"/>
</dbReference>
<dbReference type="SMR" id="A6ND91"/>
<dbReference type="BioGRID" id="299841">
    <property type="interactions" value="16"/>
</dbReference>
<dbReference type="FunCoup" id="A6ND91">
    <property type="interactions" value="194"/>
</dbReference>
<dbReference type="IntAct" id="A6ND91">
    <property type="interactions" value="6"/>
</dbReference>
<dbReference type="MINT" id="A6ND91"/>
<dbReference type="STRING" id="9606.ENSP00000373860"/>
<dbReference type="iPTMnet" id="A6ND91"/>
<dbReference type="PhosphoSitePlus" id="A6ND91"/>
<dbReference type="BioMuta" id="ASPDH"/>
<dbReference type="MassIVE" id="A6ND91"/>
<dbReference type="PaxDb" id="9606-ENSP00000373860"/>
<dbReference type="PeptideAtlas" id="A6ND91"/>
<dbReference type="ProteomicsDB" id="891">
    <molecule id="A6ND91-1"/>
</dbReference>
<dbReference type="ProteomicsDB" id="892">
    <molecule id="A6ND91-2"/>
</dbReference>
<dbReference type="Antibodypedia" id="46022">
    <property type="antibodies" value="76 antibodies from 11 providers"/>
</dbReference>
<dbReference type="DNASU" id="554235"/>
<dbReference type="Ensembl" id="ENST00000376916.7">
    <molecule id="A6ND91-2"/>
    <property type="protein sequence ID" value="ENSP00000366114.2"/>
    <property type="gene ID" value="ENSG00000204653.10"/>
</dbReference>
<dbReference type="Ensembl" id="ENST00000389208.9">
    <molecule id="A6ND91-1"/>
    <property type="protein sequence ID" value="ENSP00000373860.3"/>
    <property type="gene ID" value="ENSG00000204653.10"/>
</dbReference>
<dbReference type="GeneID" id="554235"/>
<dbReference type="KEGG" id="hsa:554235"/>
<dbReference type="MANE-Select" id="ENST00000389208.9">
    <property type="protein sequence ID" value="ENSP00000373860.3"/>
    <property type="RefSeq nucleotide sequence ID" value="NM_001114598.2"/>
    <property type="RefSeq protein sequence ID" value="NP_001108070.1"/>
</dbReference>
<dbReference type="UCSC" id="uc002psr.4">
    <molecule id="A6ND91-1"/>
    <property type="organism name" value="human"/>
</dbReference>
<dbReference type="AGR" id="HGNC:33856"/>
<dbReference type="CTD" id="554235"/>
<dbReference type="GeneCards" id="ASPDH"/>
<dbReference type="HGNC" id="HGNC:33856">
    <property type="gene designation" value="ASPDH"/>
</dbReference>
<dbReference type="HPA" id="ENSG00000204653">
    <property type="expression patterns" value="Tissue enhanced (brain, kidney, liver)"/>
</dbReference>
<dbReference type="neXtProt" id="NX_A6ND91"/>
<dbReference type="OpenTargets" id="ENSG00000204653"/>
<dbReference type="PharmGKB" id="PA164716234"/>
<dbReference type="VEuPathDB" id="HostDB:ENSG00000204653"/>
<dbReference type="eggNOG" id="ENOG502QVGC">
    <property type="taxonomic scope" value="Eukaryota"/>
</dbReference>
<dbReference type="GeneTree" id="ENSGT00390000004452"/>
<dbReference type="HOGENOM" id="CLU_063528_0_0_1"/>
<dbReference type="InParanoid" id="A6ND91"/>
<dbReference type="OMA" id="KHPTSFK"/>
<dbReference type="OrthoDB" id="4310724at2759"/>
<dbReference type="PAN-GO" id="A6ND91">
    <property type="GO annotations" value="0 GO annotations based on evolutionary models"/>
</dbReference>
<dbReference type="PhylomeDB" id="A6ND91"/>
<dbReference type="TreeFam" id="TF315092"/>
<dbReference type="PathwayCommons" id="A6ND91"/>
<dbReference type="SignaLink" id="A6ND91"/>
<dbReference type="BioGRID-ORCS" id="554235">
    <property type="hits" value="19 hits in 1145 CRISPR screens"/>
</dbReference>
<dbReference type="ChiTaRS" id="ASPDH">
    <property type="organism name" value="human"/>
</dbReference>
<dbReference type="GenomeRNAi" id="554235"/>
<dbReference type="Pharos" id="A6ND91">
    <property type="development level" value="Tbio"/>
</dbReference>
<dbReference type="PRO" id="PR:A6ND91"/>
<dbReference type="Proteomes" id="UP000005640">
    <property type="component" value="Chromosome 19"/>
</dbReference>
<dbReference type="RNAct" id="A6ND91">
    <property type="molecule type" value="protein"/>
</dbReference>
<dbReference type="Bgee" id="ENSG00000204653">
    <property type="expression patterns" value="Expressed in male germ line stem cell (sensu Vertebrata) in testis and 145 other cell types or tissues"/>
</dbReference>
<dbReference type="ExpressionAtlas" id="A6ND91">
    <property type="expression patterns" value="baseline and differential"/>
</dbReference>
<dbReference type="GO" id="GO:0033735">
    <property type="term" value="F:aspartate dehydrogenase activity"/>
    <property type="evidence" value="ECO:0007669"/>
    <property type="project" value="UniProtKB-EC"/>
</dbReference>
<dbReference type="GO" id="GO:0050661">
    <property type="term" value="F:NADP binding"/>
    <property type="evidence" value="ECO:0007669"/>
    <property type="project" value="InterPro"/>
</dbReference>
<dbReference type="GO" id="GO:0009435">
    <property type="term" value="P:NAD biosynthetic process"/>
    <property type="evidence" value="ECO:0007669"/>
    <property type="project" value="InterPro"/>
</dbReference>
<dbReference type="Gene3D" id="3.30.360.10">
    <property type="entry name" value="Dihydrodipicolinate Reductase, domain 2"/>
    <property type="match status" value="1"/>
</dbReference>
<dbReference type="Gene3D" id="3.40.50.720">
    <property type="entry name" value="NAD(P)-binding Rossmann-like Domain"/>
    <property type="match status" value="1"/>
</dbReference>
<dbReference type="InterPro" id="IPR005106">
    <property type="entry name" value="Asp/hSer_DH_NAD-bd"/>
</dbReference>
<dbReference type="InterPro" id="IPR002811">
    <property type="entry name" value="Asp_DH"/>
</dbReference>
<dbReference type="InterPro" id="IPR011182">
    <property type="entry name" value="L-Asp_DH"/>
</dbReference>
<dbReference type="InterPro" id="IPR036291">
    <property type="entry name" value="NAD(P)-bd_dom_sf"/>
</dbReference>
<dbReference type="PANTHER" id="PTHR31873:SF6">
    <property type="entry name" value="ASPARTATE DEHYDROGENASE DOMAIN-CONTAINING PROTEIN"/>
    <property type="match status" value="1"/>
</dbReference>
<dbReference type="PANTHER" id="PTHR31873">
    <property type="entry name" value="L-ASPARTATE DEHYDROGENASE-RELATED"/>
    <property type="match status" value="1"/>
</dbReference>
<dbReference type="Pfam" id="PF01958">
    <property type="entry name" value="Asp_DH_C"/>
    <property type="match status" value="1"/>
</dbReference>
<dbReference type="Pfam" id="PF03447">
    <property type="entry name" value="NAD_binding_3"/>
    <property type="match status" value="1"/>
</dbReference>
<dbReference type="PIRSF" id="PIRSF005227">
    <property type="entry name" value="Asp_dh_NAD_syn"/>
    <property type="match status" value="1"/>
</dbReference>
<dbReference type="SUPFAM" id="SSF55347">
    <property type="entry name" value="Glyceraldehyde-3-phosphate dehydrogenase-like, C-terminal domain"/>
    <property type="match status" value="1"/>
</dbReference>
<dbReference type="SUPFAM" id="SSF51735">
    <property type="entry name" value="NAD(P)-binding Rossmann-fold domains"/>
    <property type="match status" value="1"/>
</dbReference>
<evidence type="ECO:0000269" key="1">
    <source>
    </source>
</evidence>
<evidence type="ECO:0000269" key="2">
    <source ref="1"/>
</evidence>
<evidence type="ECO:0000303" key="3">
    <source>
    </source>
</evidence>
<evidence type="ECO:0000305" key="4"/>
<evidence type="ECO:0000312" key="5">
    <source>
        <dbReference type="HGNC" id="HGNC:33856"/>
    </source>
</evidence>
<evidence type="ECO:0007744" key="6">
    <source>
    </source>
</evidence>
<proteinExistence type="evidence at protein level"/>
<gene>
    <name evidence="5" type="primary">ASPDH</name>
</gene>
<reference key="1">
    <citation type="submission" date="2005-07" db="EMBL/GenBank/DDBJ databases">
        <authorList>
            <person name="Mural R.J."/>
            <person name="Istrail S."/>
            <person name="Sutton G.G."/>
            <person name="Florea L."/>
            <person name="Halpern A.L."/>
            <person name="Mobarry C.M."/>
            <person name="Lippert R."/>
            <person name="Walenz B."/>
            <person name="Shatkay H."/>
            <person name="Dew I."/>
            <person name="Miller J.R."/>
            <person name="Flanigan M.J."/>
            <person name="Edwards N.J."/>
            <person name="Bolanos R."/>
            <person name="Fasulo D."/>
            <person name="Halldorsson B.V."/>
            <person name="Hannenhalli S."/>
            <person name="Turner R."/>
            <person name="Yooseph S."/>
            <person name="Lu F."/>
            <person name="Nusskern D.R."/>
            <person name="Shue B.C."/>
            <person name="Zheng X.H."/>
            <person name="Zhong F."/>
            <person name="Delcher A.L."/>
            <person name="Huson D.H."/>
            <person name="Kravitz S.A."/>
            <person name="Mouchard L."/>
            <person name="Reinert K."/>
            <person name="Remington K.A."/>
            <person name="Clark A.G."/>
            <person name="Waterman M.S."/>
            <person name="Eichler E.E."/>
            <person name="Adams M.D."/>
            <person name="Hunkapiller M.W."/>
            <person name="Myers E.W."/>
            <person name="Venter J.C."/>
        </authorList>
    </citation>
    <scope>NUCLEOTIDE SEQUENCE [LARGE SCALE GENOMIC DNA]</scope>
    <scope>VARIANT ARG-266</scope>
</reference>
<reference key="2">
    <citation type="journal article" date="2004" name="Nature">
        <title>The DNA sequence and biology of human chromosome 19.</title>
        <authorList>
            <person name="Grimwood J."/>
            <person name="Gordon L.A."/>
            <person name="Olsen A.S."/>
            <person name="Terry A."/>
            <person name="Schmutz J."/>
            <person name="Lamerdin J.E."/>
            <person name="Hellsten U."/>
            <person name="Goodstein D."/>
            <person name="Couronne O."/>
            <person name="Tran-Gyamfi M."/>
            <person name="Aerts A."/>
            <person name="Altherr M."/>
            <person name="Ashworth L."/>
            <person name="Bajorek E."/>
            <person name="Black S."/>
            <person name="Branscomb E."/>
            <person name="Caenepeel S."/>
            <person name="Carrano A.V."/>
            <person name="Caoile C."/>
            <person name="Chan Y.M."/>
            <person name="Christensen M."/>
            <person name="Cleland C.A."/>
            <person name="Copeland A."/>
            <person name="Dalin E."/>
            <person name="Dehal P."/>
            <person name="Denys M."/>
            <person name="Detter J.C."/>
            <person name="Escobar J."/>
            <person name="Flowers D."/>
            <person name="Fotopulos D."/>
            <person name="Garcia C."/>
            <person name="Georgescu A.M."/>
            <person name="Glavina T."/>
            <person name="Gomez M."/>
            <person name="Gonzales E."/>
            <person name="Groza M."/>
            <person name="Hammon N."/>
            <person name="Hawkins T."/>
            <person name="Haydu L."/>
            <person name="Ho I."/>
            <person name="Huang W."/>
            <person name="Israni S."/>
            <person name="Jett J."/>
            <person name="Kadner K."/>
            <person name="Kimball H."/>
            <person name="Kobayashi A."/>
            <person name="Larionov V."/>
            <person name="Leem S.-H."/>
            <person name="Lopez F."/>
            <person name="Lou Y."/>
            <person name="Lowry S."/>
            <person name="Malfatti S."/>
            <person name="Martinez D."/>
            <person name="McCready P.M."/>
            <person name="Medina C."/>
            <person name="Morgan J."/>
            <person name="Nelson K."/>
            <person name="Nolan M."/>
            <person name="Ovcharenko I."/>
            <person name="Pitluck S."/>
            <person name="Pollard M."/>
            <person name="Popkie A.P."/>
            <person name="Predki P."/>
            <person name="Quan G."/>
            <person name="Ramirez L."/>
            <person name="Rash S."/>
            <person name="Retterer J."/>
            <person name="Rodriguez A."/>
            <person name="Rogers S."/>
            <person name="Salamov A."/>
            <person name="Salazar A."/>
            <person name="She X."/>
            <person name="Smith D."/>
            <person name="Slezak T."/>
            <person name="Solovyev V."/>
            <person name="Thayer N."/>
            <person name="Tice H."/>
            <person name="Tsai M."/>
            <person name="Ustaszewska A."/>
            <person name="Vo N."/>
            <person name="Wagner M."/>
            <person name="Wheeler J."/>
            <person name="Wu K."/>
            <person name="Xie G."/>
            <person name="Yang J."/>
            <person name="Dubchak I."/>
            <person name="Furey T.S."/>
            <person name="DeJong P."/>
            <person name="Dickson M."/>
            <person name="Gordon D."/>
            <person name="Eichler E.E."/>
            <person name="Pennacchio L.A."/>
            <person name="Richardson P."/>
            <person name="Stubbs L."/>
            <person name="Rokhsar D.S."/>
            <person name="Myers R.M."/>
            <person name="Rubin E.M."/>
            <person name="Lucas S.M."/>
        </authorList>
    </citation>
    <scope>NUCLEOTIDE SEQUENCE [LARGE SCALE GENOMIC DNA]</scope>
</reference>
<reference key="3">
    <citation type="journal article" date="2004" name="Genome Res.">
        <title>The status, quality, and expansion of the NIH full-length cDNA project: the Mammalian Gene Collection (MGC).</title>
        <authorList>
            <consortium name="The MGC Project Team"/>
        </authorList>
    </citation>
    <scope>NUCLEOTIDE SEQUENCE [LARGE SCALE MRNA] (ISOFORM 2)</scope>
    <scope>VARIANT ARG-266</scope>
    <source>
        <tissue>Brain</tissue>
    </source>
</reference>
<reference key="4">
    <citation type="journal article" date="2014" name="J. Proteomics">
        <title>An enzyme assisted RP-RPLC approach for in-depth analysis of human liver phosphoproteome.</title>
        <authorList>
            <person name="Bian Y."/>
            <person name="Song C."/>
            <person name="Cheng K."/>
            <person name="Dong M."/>
            <person name="Wang F."/>
            <person name="Huang J."/>
            <person name="Sun D."/>
            <person name="Wang L."/>
            <person name="Ye M."/>
            <person name="Zou H."/>
        </authorList>
    </citation>
    <scope>PHOSPHORYLATION [LARGE SCALE ANALYSIS] AT SER-20 AND SER-168</scope>
    <scope>IDENTIFICATION BY MASS SPECTROMETRY [LARGE SCALE ANALYSIS]</scope>
    <source>
        <tissue>Liver</tissue>
    </source>
</reference>
<organism>
    <name type="scientific">Homo sapiens</name>
    <name type="common">Human</name>
    <dbReference type="NCBI Taxonomy" id="9606"/>
    <lineage>
        <taxon>Eukaryota</taxon>
        <taxon>Metazoa</taxon>
        <taxon>Chordata</taxon>
        <taxon>Craniata</taxon>
        <taxon>Vertebrata</taxon>
        <taxon>Euteleostomi</taxon>
        <taxon>Mammalia</taxon>
        <taxon>Eutheria</taxon>
        <taxon>Euarchontoglires</taxon>
        <taxon>Primates</taxon>
        <taxon>Haplorrhini</taxon>
        <taxon>Catarrhini</taxon>
        <taxon>Hominidae</taxon>
        <taxon>Homo</taxon>
    </lineage>
</organism>